<protein>
    <recommendedName>
        <fullName evidence="1">dCTP deaminase</fullName>
        <ecNumber evidence="1">3.5.4.13</ecNumber>
    </recommendedName>
    <alternativeName>
        <fullName evidence="1">Deoxycytidine triphosphate deaminase</fullName>
    </alternativeName>
</protein>
<comment type="function">
    <text evidence="1">Catalyzes the deamination of dCTP to dUTP.</text>
</comment>
<comment type="catalytic activity">
    <reaction evidence="1">
        <text>dCTP + H2O + H(+) = dUTP + NH4(+)</text>
        <dbReference type="Rhea" id="RHEA:22680"/>
        <dbReference type="ChEBI" id="CHEBI:15377"/>
        <dbReference type="ChEBI" id="CHEBI:15378"/>
        <dbReference type="ChEBI" id="CHEBI:28938"/>
        <dbReference type="ChEBI" id="CHEBI:61481"/>
        <dbReference type="ChEBI" id="CHEBI:61555"/>
        <dbReference type="EC" id="3.5.4.13"/>
    </reaction>
</comment>
<comment type="pathway">
    <text evidence="1">Pyrimidine metabolism; dUMP biosynthesis; dUMP from dCTP (dUTP route): step 1/2.</text>
</comment>
<comment type="subunit">
    <text evidence="1">Homotrimer.</text>
</comment>
<comment type="similarity">
    <text evidence="1">Belongs to the dCTP deaminase family.</text>
</comment>
<proteinExistence type="inferred from homology"/>
<accession>A1WUY3</accession>
<dbReference type="EC" id="3.5.4.13" evidence="1"/>
<dbReference type="EMBL" id="CP000544">
    <property type="protein sequence ID" value="ABM61495.1"/>
    <property type="molecule type" value="Genomic_DNA"/>
</dbReference>
<dbReference type="RefSeq" id="WP_011813518.1">
    <property type="nucleotide sequence ID" value="NC_008789.1"/>
</dbReference>
<dbReference type="SMR" id="A1WUY3"/>
<dbReference type="STRING" id="349124.Hhal_0713"/>
<dbReference type="KEGG" id="hha:Hhal_0713"/>
<dbReference type="eggNOG" id="COG0717">
    <property type="taxonomic scope" value="Bacteria"/>
</dbReference>
<dbReference type="HOGENOM" id="CLU_087476_4_0_6"/>
<dbReference type="OrthoDB" id="9780956at2"/>
<dbReference type="UniPathway" id="UPA00610">
    <property type="reaction ID" value="UER00665"/>
</dbReference>
<dbReference type="Proteomes" id="UP000000647">
    <property type="component" value="Chromosome"/>
</dbReference>
<dbReference type="GO" id="GO:0008829">
    <property type="term" value="F:dCTP deaminase activity"/>
    <property type="evidence" value="ECO:0007669"/>
    <property type="project" value="UniProtKB-UniRule"/>
</dbReference>
<dbReference type="GO" id="GO:0000166">
    <property type="term" value="F:nucleotide binding"/>
    <property type="evidence" value="ECO:0007669"/>
    <property type="project" value="UniProtKB-KW"/>
</dbReference>
<dbReference type="GO" id="GO:0006226">
    <property type="term" value="P:dUMP biosynthetic process"/>
    <property type="evidence" value="ECO:0007669"/>
    <property type="project" value="UniProtKB-UniPathway"/>
</dbReference>
<dbReference type="GO" id="GO:0006229">
    <property type="term" value="P:dUTP biosynthetic process"/>
    <property type="evidence" value="ECO:0007669"/>
    <property type="project" value="UniProtKB-UniRule"/>
</dbReference>
<dbReference type="GO" id="GO:0015949">
    <property type="term" value="P:nucleobase-containing small molecule interconversion"/>
    <property type="evidence" value="ECO:0007669"/>
    <property type="project" value="TreeGrafter"/>
</dbReference>
<dbReference type="CDD" id="cd07557">
    <property type="entry name" value="trimeric_dUTPase"/>
    <property type="match status" value="1"/>
</dbReference>
<dbReference type="FunFam" id="2.70.40.10:FF:000001">
    <property type="entry name" value="dCTP deaminase"/>
    <property type="match status" value="1"/>
</dbReference>
<dbReference type="Gene3D" id="2.70.40.10">
    <property type="match status" value="1"/>
</dbReference>
<dbReference type="HAMAP" id="MF_00146">
    <property type="entry name" value="dCTP_deaminase"/>
    <property type="match status" value="1"/>
</dbReference>
<dbReference type="InterPro" id="IPR011962">
    <property type="entry name" value="dCTP_deaminase"/>
</dbReference>
<dbReference type="InterPro" id="IPR036157">
    <property type="entry name" value="dUTPase-like_sf"/>
</dbReference>
<dbReference type="InterPro" id="IPR033704">
    <property type="entry name" value="dUTPase_trimeric"/>
</dbReference>
<dbReference type="NCBIfam" id="TIGR02274">
    <property type="entry name" value="dCTP_deam"/>
    <property type="match status" value="1"/>
</dbReference>
<dbReference type="PANTHER" id="PTHR42680">
    <property type="entry name" value="DCTP DEAMINASE"/>
    <property type="match status" value="1"/>
</dbReference>
<dbReference type="PANTHER" id="PTHR42680:SF3">
    <property type="entry name" value="DCTP DEAMINASE"/>
    <property type="match status" value="1"/>
</dbReference>
<dbReference type="Pfam" id="PF22769">
    <property type="entry name" value="DCD"/>
    <property type="match status" value="1"/>
</dbReference>
<dbReference type="SUPFAM" id="SSF51283">
    <property type="entry name" value="dUTPase-like"/>
    <property type="match status" value="1"/>
</dbReference>
<keyword id="KW-0378">Hydrolase</keyword>
<keyword id="KW-0546">Nucleotide metabolism</keyword>
<keyword id="KW-0547">Nucleotide-binding</keyword>
<keyword id="KW-1185">Reference proteome</keyword>
<sequence length="189" mass="21137">MTIKSDRWIRHMAQEHGMIEPFEPGQVRDTPEGQRVISYGTSSYGYDVRCGKDFKIFTDINSAVVDPKNFDAASFVDVHGDVCIIPPNSFALAYTLEYFRIPRNVLTICLGKSTYARCGIIVNVTPLEPEWEGRVTLEFSNTTPLPAKIHANEGVAQMLFFESDEPCEVSYADRGGKYMGQDGVTLPRS</sequence>
<organism>
    <name type="scientific">Halorhodospira halophila (strain DSM 244 / SL1)</name>
    <name type="common">Ectothiorhodospira halophila (strain DSM 244 / SL1)</name>
    <dbReference type="NCBI Taxonomy" id="349124"/>
    <lineage>
        <taxon>Bacteria</taxon>
        <taxon>Pseudomonadati</taxon>
        <taxon>Pseudomonadota</taxon>
        <taxon>Gammaproteobacteria</taxon>
        <taxon>Chromatiales</taxon>
        <taxon>Ectothiorhodospiraceae</taxon>
        <taxon>Halorhodospira</taxon>
    </lineage>
</organism>
<gene>
    <name evidence="1" type="primary">dcd</name>
    <name type="ordered locus">Hhal_0713</name>
</gene>
<evidence type="ECO:0000255" key="1">
    <source>
        <dbReference type="HAMAP-Rule" id="MF_00146"/>
    </source>
</evidence>
<name>DCD_HALHL</name>
<feature type="chain" id="PRO_1000009736" description="dCTP deaminase">
    <location>
        <begin position="1"/>
        <end position="189"/>
    </location>
</feature>
<feature type="active site" description="Proton donor/acceptor" evidence="1">
    <location>
        <position position="138"/>
    </location>
</feature>
<feature type="binding site" evidence="1">
    <location>
        <begin position="112"/>
        <end position="117"/>
    </location>
    <ligand>
        <name>dCTP</name>
        <dbReference type="ChEBI" id="CHEBI:61481"/>
    </ligand>
</feature>
<feature type="binding site" evidence="1">
    <location>
        <begin position="136"/>
        <end position="138"/>
    </location>
    <ligand>
        <name>dCTP</name>
        <dbReference type="ChEBI" id="CHEBI:61481"/>
    </ligand>
</feature>
<feature type="binding site" evidence="1">
    <location>
        <position position="157"/>
    </location>
    <ligand>
        <name>dCTP</name>
        <dbReference type="ChEBI" id="CHEBI:61481"/>
    </ligand>
</feature>
<feature type="binding site" evidence="1">
    <location>
        <position position="171"/>
    </location>
    <ligand>
        <name>dCTP</name>
        <dbReference type="ChEBI" id="CHEBI:61481"/>
    </ligand>
</feature>
<feature type="binding site" evidence="1">
    <location>
        <position position="181"/>
    </location>
    <ligand>
        <name>dCTP</name>
        <dbReference type="ChEBI" id="CHEBI:61481"/>
    </ligand>
</feature>
<reference key="1">
    <citation type="submission" date="2006-12" db="EMBL/GenBank/DDBJ databases">
        <title>Complete sequence of Halorhodospira halophila SL1.</title>
        <authorList>
            <consortium name="US DOE Joint Genome Institute"/>
            <person name="Copeland A."/>
            <person name="Lucas S."/>
            <person name="Lapidus A."/>
            <person name="Barry K."/>
            <person name="Detter J.C."/>
            <person name="Glavina del Rio T."/>
            <person name="Hammon N."/>
            <person name="Israni S."/>
            <person name="Dalin E."/>
            <person name="Tice H."/>
            <person name="Pitluck S."/>
            <person name="Saunders E."/>
            <person name="Brettin T."/>
            <person name="Bruce D."/>
            <person name="Han C."/>
            <person name="Tapia R."/>
            <person name="Schmutz J."/>
            <person name="Larimer F."/>
            <person name="Land M."/>
            <person name="Hauser L."/>
            <person name="Kyrpides N."/>
            <person name="Mikhailova N."/>
            <person name="Hoff W."/>
            <person name="Richardson P."/>
        </authorList>
    </citation>
    <scope>NUCLEOTIDE SEQUENCE [LARGE SCALE GENOMIC DNA]</scope>
    <source>
        <strain>DSM 244 / SL1</strain>
    </source>
</reference>